<reference key="1">
    <citation type="journal article" date="1995" name="FEMS Microbiol. Lett.">
        <title>A comparison of gene organization in the zwf region of the genomes of the cyanobacteria Synechococcus sp. PCC 7942 and Anabaena sp. PCC 7120.</title>
        <authorList>
            <person name="Newman J."/>
            <person name="Karakaya H."/>
            <person name="Scanlan D.J."/>
            <person name="Mann N.H."/>
        </authorList>
    </citation>
    <scope>NUCLEOTIDE SEQUENCE [GENOMIC DNA]</scope>
</reference>
<reference key="2">
    <citation type="journal article" date="2001" name="DNA Res.">
        <title>Complete genomic sequence of the filamentous nitrogen-fixing cyanobacterium Anabaena sp. strain PCC 7120.</title>
        <authorList>
            <person name="Kaneko T."/>
            <person name="Nakamura Y."/>
            <person name="Wolk C.P."/>
            <person name="Kuritz T."/>
            <person name="Sasamoto S."/>
            <person name="Watanabe A."/>
            <person name="Iriguchi M."/>
            <person name="Ishikawa A."/>
            <person name="Kawashima K."/>
            <person name="Kimura T."/>
            <person name="Kishida Y."/>
            <person name="Kohara M."/>
            <person name="Matsumoto M."/>
            <person name="Matsuno A."/>
            <person name="Muraki A."/>
            <person name="Nakazaki N."/>
            <person name="Shimpo S."/>
            <person name="Sugimoto M."/>
            <person name="Takazawa M."/>
            <person name="Yamada M."/>
            <person name="Yasuda M."/>
            <person name="Tabata S."/>
        </authorList>
    </citation>
    <scope>NUCLEOTIDE SEQUENCE [LARGE SCALE GENOMIC DNA]</scope>
    <source>
        <strain>PCC 7120 / SAG 25.82 / UTEX 2576</strain>
    </source>
</reference>
<comment type="function">
    <text evidence="1">Transaldolase is important for the balance of metabolites in the pentose-phosphate pathway.</text>
</comment>
<comment type="catalytic activity">
    <reaction>
        <text>D-sedoheptulose 7-phosphate + D-glyceraldehyde 3-phosphate = D-erythrose 4-phosphate + beta-D-fructose 6-phosphate</text>
        <dbReference type="Rhea" id="RHEA:17053"/>
        <dbReference type="ChEBI" id="CHEBI:16897"/>
        <dbReference type="ChEBI" id="CHEBI:57483"/>
        <dbReference type="ChEBI" id="CHEBI:57634"/>
        <dbReference type="ChEBI" id="CHEBI:59776"/>
        <dbReference type="EC" id="2.2.1.2"/>
    </reaction>
</comment>
<comment type="pathway">
    <text>Carbohydrate degradation; pentose phosphate pathway; D-glyceraldehyde 3-phosphate and beta-D-fructose 6-phosphate from D-ribose 5-phosphate and D-xylulose 5-phosphate (non-oxidative stage): step 2/3.</text>
</comment>
<comment type="subcellular location">
    <subcellularLocation>
        <location evidence="1">Cytoplasm</location>
    </subcellularLocation>
</comment>
<comment type="similarity">
    <text evidence="2">Belongs to the transaldolase family. Type 2 subfamily.</text>
</comment>
<gene>
    <name type="primary">tal2</name>
    <name type="ordered locus">all4020</name>
</gene>
<sequence>MAINHLLEIKEYGQSIWMDNLSRDIIQSGELKNLVENQGICGITSNPAIFEKAIANNVIYDADIEAGVRAGLPTYKIYESLIFADIRNACDILRPVYEASNKLDGYVSIEVPPTIAHDTQATINEARRYYQEIGRENVMIKIPGTEAGLPAVEQVIAEGINVNVTLLFSVQSYINTIWAYIRGLEKRLAEGKDISQIASVASFFLSRIDINIDGKIDAKLARGVDDISLEAKLMVVKGKVAIANAKIAYQEYKKIIESDQWQALAAKGAKVQRLLWASTSTKDPNYSDVMYVDELIGPDTVNTLPPATITACADHCEVANRVETGVAEAYQLIESLKDPDINIDINAVMDELLIEGINKFVQPFQSLMNSLEGKVKLLSPV</sequence>
<keyword id="KW-0963">Cytoplasm</keyword>
<keyword id="KW-0570">Pentose shunt</keyword>
<keyword id="KW-1185">Reference proteome</keyword>
<keyword id="KW-0704">Schiff base</keyword>
<keyword id="KW-0808">Transferase</keyword>
<accession>P48993</accession>
<feature type="chain" id="PRO_0000173628" description="Transaldolase 2">
    <location>
        <begin position="1"/>
        <end position="381"/>
    </location>
</feature>
<feature type="active site" description="Schiff-base intermediate with substrate" evidence="1">
    <location>
        <position position="141"/>
    </location>
</feature>
<feature type="sequence conflict" description="In Ref. 1; AAA98852." evidence="2" ref="1">
    <original>SI</original>
    <variation>MY</variation>
    <location>
        <begin position="15"/>
        <end position="16"/>
    </location>
</feature>
<proteinExistence type="inferred from homology"/>
<organism>
    <name type="scientific">Nostoc sp. (strain PCC 7120 / SAG 25.82 / UTEX 2576)</name>
    <dbReference type="NCBI Taxonomy" id="103690"/>
    <lineage>
        <taxon>Bacteria</taxon>
        <taxon>Bacillati</taxon>
        <taxon>Cyanobacteriota</taxon>
        <taxon>Cyanophyceae</taxon>
        <taxon>Nostocales</taxon>
        <taxon>Nostocaceae</taxon>
        <taxon>Nostoc</taxon>
    </lineage>
</organism>
<evidence type="ECO:0000250" key="1"/>
<evidence type="ECO:0000305" key="2"/>
<dbReference type="EC" id="2.2.1.2"/>
<dbReference type="EMBL" id="U33282">
    <property type="protein sequence ID" value="AAA98852.1"/>
    <property type="molecule type" value="Genomic_DNA"/>
</dbReference>
<dbReference type="EMBL" id="BA000019">
    <property type="protein sequence ID" value="BAB75719.1"/>
    <property type="molecule type" value="Genomic_DNA"/>
</dbReference>
<dbReference type="PIR" id="AE2308">
    <property type="entry name" value="AE2308"/>
</dbReference>
<dbReference type="SMR" id="P48993"/>
<dbReference type="STRING" id="103690.gene:10496063"/>
<dbReference type="KEGG" id="ana:all4020"/>
<dbReference type="eggNOG" id="COG0176">
    <property type="taxonomic scope" value="Bacteria"/>
</dbReference>
<dbReference type="OrthoDB" id="140919at2"/>
<dbReference type="UniPathway" id="UPA00115">
    <property type="reaction ID" value="UER00414"/>
</dbReference>
<dbReference type="Proteomes" id="UP000002483">
    <property type="component" value="Chromosome"/>
</dbReference>
<dbReference type="GO" id="GO:0005737">
    <property type="term" value="C:cytoplasm"/>
    <property type="evidence" value="ECO:0007669"/>
    <property type="project" value="UniProtKB-SubCell"/>
</dbReference>
<dbReference type="GO" id="GO:0004801">
    <property type="term" value="F:transaldolase activity"/>
    <property type="evidence" value="ECO:0007669"/>
    <property type="project" value="UniProtKB-UniRule"/>
</dbReference>
<dbReference type="GO" id="GO:0005975">
    <property type="term" value="P:carbohydrate metabolic process"/>
    <property type="evidence" value="ECO:0007669"/>
    <property type="project" value="InterPro"/>
</dbReference>
<dbReference type="GO" id="GO:0006098">
    <property type="term" value="P:pentose-phosphate shunt"/>
    <property type="evidence" value="ECO:0007669"/>
    <property type="project" value="UniProtKB-UniRule"/>
</dbReference>
<dbReference type="CDD" id="cd00955">
    <property type="entry name" value="Transaldolase_like"/>
    <property type="match status" value="1"/>
</dbReference>
<dbReference type="Gene3D" id="3.20.20.70">
    <property type="entry name" value="Aldolase class I"/>
    <property type="match status" value="1"/>
</dbReference>
<dbReference type="HAMAP" id="MF_00493">
    <property type="entry name" value="Transaldolase_2"/>
    <property type="match status" value="1"/>
</dbReference>
<dbReference type="InterPro" id="IPR013785">
    <property type="entry name" value="Aldolase_TIM"/>
</dbReference>
<dbReference type="InterPro" id="IPR001585">
    <property type="entry name" value="TAL/FSA"/>
</dbReference>
<dbReference type="InterPro" id="IPR004732">
    <property type="entry name" value="Transaldolase_2"/>
</dbReference>
<dbReference type="InterPro" id="IPR018225">
    <property type="entry name" value="Transaldolase_AS"/>
</dbReference>
<dbReference type="NCBIfam" id="NF002881">
    <property type="entry name" value="PRK03343.1"/>
    <property type="match status" value="1"/>
</dbReference>
<dbReference type="NCBIfam" id="TIGR00876">
    <property type="entry name" value="tal_mycobact"/>
    <property type="match status" value="1"/>
</dbReference>
<dbReference type="PANTHER" id="PTHR10683">
    <property type="entry name" value="TRANSALDOLASE"/>
    <property type="match status" value="1"/>
</dbReference>
<dbReference type="PANTHER" id="PTHR10683:SF31">
    <property type="entry name" value="TRANSALDOLASE"/>
    <property type="match status" value="1"/>
</dbReference>
<dbReference type="Pfam" id="PF00923">
    <property type="entry name" value="TAL_FSA"/>
    <property type="match status" value="1"/>
</dbReference>
<dbReference type="PIRSF" id="PIRSF036915">
    <property type="entry name" value="Trnald_Bac_Plnt"/>
    <property type="match status" value="1"/>
</dbReference>
<dbReference type="SUPFAM" id="SSF51569">
    <property type="entry name" value="Aldolase"/>
    <property type="match status" value="1"/>
</dbReference>
<dbReference type="PROSITE" id="PS01054">
    <property type="entry name" value="TRANSALDOLASE_1"/>
    <property type="match status" value="1"/>
</dbReference>
<dbReference type="PROSITE" id="PS00958">
    <property type="entry name" value="TRANSALDOLASE_2"/>
    <property type="match status" value="1"/>
</dbReference>
<protein>
    <recommendedName>
        <fullName>Transaldolase 2</fullName>
        <ecNumber>2.2.1.2</ecNumber>
    </recommendedName>
</protein>
<name>TAL2_NOSS1</name>